<accession>Q1GFI8</accession>
<gene>
    <name evidence="1" type="primary">lolD</name>
    <name type="ordered locus">TM1040_1845</name>
</gene>
<evidence type="ECO:0000255" key="1">
    <source>
        <dbReference type="HAMAP-Rule" id="MF_01708"/>
    </source>
</evidence>
<reference key="1">
    <citation type="submission" date="2006-05" db="EMBL/GenBank/DDBJ databases">
        <title>Complete sequence of chromosome of Silicibacter sp. TM1040.</title>
        <authorList>
            <consortium name="US DOE Joint Genome Institute"/>
            <person name="Copeland A."/>
            <person name="Lucas S."/>
            <person name="Lapidus A."/>
            <person name="Barry K."/>
            <person name="Detter J.C."/>
            <person name="Glavina del Rio T."/>
            <person name="Hammon N."/>
            <person name="Israni S."/>
            <person name="Dalin E."/>
            <person name="Tice H."/>
            <person name="Pitluck S."/>
            <person name="Brettin T."/>
            <person name="Bruce D."/>
            <person name="Han C."/>
            <person name="Tapia R."/>
            <person name="Goodwin L."/>
            <person name="Thompson L.S."/>
            <person name="Gilna P."/>
            <person name="Schmutz J."/>
            <person name="Larimer F."/>
            <person name="Land M."/>
            <person name="Hauser L."/>
            <person name="Kyrpides N."/>
            <person name="Kim E."/>
            <person name="Belas R."/>
            <person name="Moran M.A."/>
            <person name="Buchan A."/>
            <person name="Gonzalez J.M."/>
            <person name="Schell M.A."/>
            <person name="Sun F."/>
            <person name="Richardson P."/>
        </authorList>
    </citation>
    <scope>NUCLEOTIDE SEQUENCE [LARGE SCALE GENOMIC DNA]</scope>
    <source>
        <strain>TM1040</strain>
    </source>
</reference>
<name>LOLD_RUEST</name>
<dbReference type="EC" id="7.6.2.-" evidence="1"/>
<dbReference type="EMBL" id="CP000377">
    <property type="protein sequence ID" value="ABF64578.1"/>
    <property type="molecule type" value="Genomic_DNA"/>
</dbReference>
<dbReference type="RefSeq" id="WP_011539173.1">
    <property type="nucleotide sequence ID" value="NC_008044.1"/>
</dbReference>
<dbReference type="SMR" id="Q1GFI8"/>
<dbReference type="STRING" id="292414.TM1040_1845"/>
<dbReference type="KEGG" id="sit:TM1040_1845"/>
<dbReference type="eggNOG" id="COG1136">
    <property type="taxonomic scope" value="Bacteria"/>
</dbReference>
<dbReference type="HOGENOM" id="CLU_000604_1_22_5"/>
<dbReference type="OrthoDB" id="9786950at2"/>
<dbReference type="Proteomes" id="UP000000636">
    <property type="component" value="Chromosome"/>
</dbReference>
<dbReference type="GO" id="GO:0005886">
    <property type="term" value="C:plasma membrane"/>
    <property type="evidence" value="ECO:0007669"/>
    <property type="project" value="UniProtKB-SubCell"/>
</dbReference>
<dbReference type="GO" id="GO:0005524">
    <property type="term" value="F:ATP binding"/>
    <property type="evidence" value="ECO:0007669"/>
    <property type="project" value="UniProtKB-KW"/>
</dbReference>
<dbReference type="GO" id="GO:0016887">
    <property type="term" value="F:ATP hydrolysis activity"/>
    <property type="evidence" value="ECO:0007669"/>
    <property type="project" value="InterPro"/>
</dbReference>
<dbReference type="GO" id="GO:0022857">
    <property type="term" value="F:transmembrane transporter activity"/>
    <property type="evidence" value="ECO:0007669"/>
    <property type="project" value="TreeGrafter"/>
</dbReference>
<dbReference type="GO" id="GO:0044874">
    <property type="term" value="P:lipoprotein localization to outer membrane"/>
    <property type="evidence" value="ECO:0007669"/>
    <property type="project" value="TreeGrafter"/>
</dbReference>
<dbReference type="GO" id="GO:0089705">
    <property type="term" value="P:protein localization to outer membrane"/>
    <property type="evidence" value="ECO:0007669"/>
    <property type="project" value="TreeGrafter"/>
</dbReference>
<dbReference type="CDD" id="cd03255">
    <property type="entry name" value="ABC_MJ0796_LolCDE_FtsE"/>
    <property type="match status" value="1"/>
</dbReference>
<dbReference type="FunFam" id="3.40.50.300:FF:000032">
    <property type="entry name" value="Export ABC transporter ATP-binding protein"/>
    <property type="match status" value="1"/>
</dbReference>
<dbReference type="Gene3D" id="3.40.50.300">
    <property type="entry name" value="P-loop containing nucleotide triphosphate hydrolases"/>
    <property type="match status" value="1"/>
</dbReference>
<dbReference type="InterPro" id="IPR003593">
    <property type="entry name" value="AAA+_ATPase"/>
</dbReference>
<dbReference type="InterPro" id="IPR003439">
    <property type="entry name" value="ABC_transporter-like_ATP-bd"/>
</dbReference>
<dbReference type="InterPro" id="IPR017871">
    <property type="entry name" value="ABC_transporter-like_CS"/>
</dbReference>
<dbReference type="InterPro" id="IPR015854">
    <property type="entry name" value="ABC_transpr_LolD-like"/>
</dbReference>
<dbReference type="InterPro" id="IPR017911">
    <property type="entry name" value="MacB-like_ATP-bd"/>
</dbReference>
<dbReference type="InterPro" id="IPR027417">
    <property type="entry name" value="P-loop_NTPase"/>
</dbReference>
<dbReference type="PANTHER" id="PTHR24220">
    <property type="entry name" value="IMPORT ATP-BINDING PROTEIN"/>
    <property type="match status" value="1"/>
</dbReference>
<dbReference type="PANTHER" id="PTHR24220:SF689">
    <property type="entry name" value="LIPOPROTEIN-RELEASING SYSTEM ATP-BINDING PROTEIN LOLD"/>
    <property type="match status" value="1"/>
</dbReference>
<dbReference type="Pfam" id="PF00005">
    <property type="entry name" value="ABC_tran"/>
    <property type="match status" value="1"/>
</dbReference>
<dbReference type="SMART" id="SM00382">
    <property type="entry name" value="AAA"/>
    <property type="match status" value="1"/>
</dbReference>
<dbReference type="SUPFAM" id="SSF52540">
    <property type="entry name" value="P-loop containing nucleoside triphosphate hydrolases"/>
    <property type="match status" value="1"/>
</dbReference>
<dbReference type="PROSITE" id="PS00211">
    <property type="entry name" value="ABC_TRANSPORTER_1"/>
    <property type="match status" value="1"/>
</dbReference>
<dbReference type="PROSITE" id="PS50893">
    <property type="entry name" value="ABC_TRANSPORTER_2"/>
    <property type="match status" value="1"/>
</dbReference>
<dbReference type="PROSITE" id="PS51244">
    <property type="entry name" value="LOLD"/>
    <property type="match status" value="1"/>
</dbReference>
<sequence length="227" mass="24334">MSEVTLKIEGLRKTYLAGTPGEVAVLRGVDLTLHAGEVVALVAPSGAGKSTLLQIAGLLDVADAGRVEIAGQDMAGARDRKRTRVRRQDVGFVYQFHHLLPEFSALENIVLPQLANGISQRDAEARGAELLALVGLETRAAHRPAALSGGEQQRVAFCRALANRPRLLLADEPTGNLDPATSDQVFEVLMQLVSETGLSALIATHNLELAARMDRVLHLEDGVLVER</sequence>
<keyword id="KW-0067">ATP-binding</keyword>
<keyword id="KW-0997">Cell inner membrane</keyword>
<keyword id="KW-1003">Cell membrane</keyword>
<keyword id="KW-0472">Membrane</keyword>
<keyword id="KW-0547">Nucleotide-binding</keyword>
<keyword id="KW-1185">Reference proteome</keyword>
<keyword id="KW-1278">Translocase</keyword>
<keyword id="KW-0813">Transport</keyword>
<organism>
    <name type="scientific">Ruegeria sp. (strain TM1040)</name>
    <name type="common">Silicibacter sp.</name>
    <dbReference type="NCBI Taxonomy" id="292414"/>
    <lineage>
        <taxon>Bacteria</taxon>
        <taxon>Pseudomonadati</taxon>
        <taxon>Pseudomonadota</taxon>
        <taxon>Alphaproteobacteria</taxon>
        <taxon>Rhodobacterales</taxon>
        <taxon>Roseobacteraceae</taxon>
        <taxon>Ruegeria</taxon>
    </lineage>
</organism>
<feature type="chain" id="PRO_0000272157" description="Lipoprotein-releasing system ATP-binding protein LolD">
    <location>
        <begin position="1"/>
        <end position="227"/>
    </location>
</feature>
<feature type="domain" description="ABC transporter" evidence="1">
    <location>
        <begin position="6"/>
        <end position="227"/>
    </location>
</feature>
<feature type="binding site" evidence="1">
    <location>
        <begin position="43"/>
        <end position="50"/>
    </location>
    <ligand>
        <name>ATP</name>
        <dbReference type="ChEBI" id="CHEBI:30616"/>
    </ligand>
</feature>
<proteinExistence type="inferred from homology"/>
<protein>
    <recommendedName>
        <fullName evidence="1">Lipoprotein-releasing system ATP-binding protein LolD</fullName>
        <ecNumber evidence="1">7.6.2.-</ecNumber>
    </recommendedName>
</protein>
<comment type="function">
    <text evidence="1">Part of the ABC transporter complex LolCDE involved in the translocation of mature outer membrane-directed lipoproteins, from the inner membrane to the periplasmic chaperone, LolA. Responsible for the formation of the LolA-lipoprotein complex in an ATP-dependent manner.</text>
</comment>
<comment type="subunit">
    <text evidence="1">The complex is composed of two ATP-binding proteins (LolD) and two transmembrane proteins (LolC and LolE).</text>
</comment>
<comment type="subcellular location">
    <subcellularLocation>
        <location evidence="1">Cell inner membrane</location>
        <topology evidence="1">Peripheral membrane protein</topology>
    </subcellularLocation>
</comment>
<comment type="similarity">
    <text evidence="1">Belongs to the ABC transporter superfamily. Lipoprotein translocase (TC 3.A.1.125) family.</text>
</comment>